<organism>
    <name type="scientific">Chlorobium phaeovibrioides (strain DSM 265 / 1930)</name>
    <name type="common">Prosthecochloris vibrioformis (strain DSM 265)</name>
    <dbReference type="NCBI Taxonomy" id="290318"/>
    <lineage>
        <taxon>Bacteria</taxon>
        <taxon>Pseudomonadati</taxon>
        <taxon>Chlorobiota</taxon>
        <taxon>Chlorobiia</taxon>
        <taxon>Chlorobiales</taxon>
        <taxon>Chlorobiaceae</taxon>
        <taxon>Chlorobium/Pelodictyon group</taxon>
        <taxon>Chlorobium</taxon>
    </lineage>
</organism>
<sequence length="874" mass="97458">MAAKKSGASKELSPMMRQYLDVKKQYADYLLLFRVGDFYETFFDDAATISAAVNIVLTRRSNGSAPDIPMAGFPYHASEGYIARLVRKGFKVAVCEQVEDPAEAKGIVKREITEIVTPGVTYSDSILEDRHNNYLAAVAFLKEGRTPVAGIAYLDVTTAEFRIASLPPHSLRDTILSLGPAELLVSSSEKSRLEDLVRGYATGMLVTGLDDWMFSEEQAETVLSRQFRTHSLKGFGIEGNRAGRVAAGVVLQYLDETRQSRRAYITRISEMQGGEFMTLDLQTKRNLEIVSSMQDGSPHGSLLQVMDRTVNPMGARLIRRWLQRPLRVAEAIAERHDGVEELLQSSELSEGVRCSLSEINDLERSLARIATFRTSPREVLQMGRSLAVFPQLRDLLLPALSARLRSLAAVLQPLPELVSEIERSVDPECGATVRDGGYIRSGCNDELDELRSVSSMAKERLMDIQREEREKTGISSLKVQYNRVFGYYIEISRANLDRVPEGYMKKQTLVNAERYTIPALKAYEEKILNAEERSLRLEAEIFQALCASIAERAASIQESALAIAEIDTLASFALSAKEYGYCKPEMKEHEGLLITEGRHPVLERIMKPDEPFVKNDCHFDGQQRMLMITGPNMAGKSSYLRQTGLIVLLAQAGSFVPAERAEIGMVDRIFTRVGASDNLASGESTFLVEMNEAASILNNATSSSLILLDEIGRGTSTFDGMSIAWSMSEYIITRLGARTLFATHYHELSELEERLPGVVNYNATVVESGERVIFLRKIVRGSTDNSYGIEVARMAGMPNEVIERAREIMSGLERKDVSFADRSFSVQENMQISLFDEVDSRLKTALQDLDLERLTPIEALLELEKLQKLLRGHS</sequence>
<comment type="function">
    <text evidence="1">This protein is involved in the repair of mismatches in DNA. It is possible that it carries out the mismatch recognition step. This protein has a weak ATPase activity.</text>
</comment>
<comment type="similarity">
    <text evidence="1">Belongs to the DNA mismatch repair MutS family.</text>
</comment>
<feature type="chain" id="PRO_0000335202" description="DNA mismatch repair protein MutS">
    <location>
        <begin position="1"/>
        <end position="874"/>
    </location>
</feature>
<feature type="binding site" evidence="1">
    <location>
        <begin position="630"/>
        <end position="637"/>
    </location>
    <ligand>
        <name>ATP</name>
        <dbReference type="ChEBI" id="CHEBI:30616"/>
    </ligand>
</feature>
<evidence type="ECO:0000255" key="1">
    <source>
        <dbReference type="HAMAP-Rule" id="MF_00096"/>
    </source>
</evidence>
<protein>
    <recommendedName>
        <fullName evidence="1">DNA mismatch repair protein MutS</fullName>
    </recommendedName>
</protein>
<proteinExistence type="inferred from homology"/>
<accession>A4SFT1</accession>
<name>MUTS_CHLPM</name>
<gene>
    <name evidence="1" type="primary">mutS</name>
    <name type="ordered locus">Cvib_1328</name>
</gene>
<reference key="1">
    <citation type="submission" date="2007-03" db="EMBL/GenBank/DDBJ databases">
        <title>Complete sequence of Prosthecochloris vibrioformis DSM 265.</title>
        <authorList>
            <consortium name="US DOE Joint Genome Institute"/>
            <person name="Copeland A."/>
            <person name="Lucas S."/>
            <person name="Lapidus A."/>
            <person name="Barry K."/>
            <person name="Detter J.C."/>
            <person name="Glavina del Rio T."/>
            <person name="Hammon N."/>
            <person name="Israni S."/>
            <person name="Pitluck S."/>
            <person name="Schmutz J."/>
            <person name="Larimer F."/>
            <person name="Land M."/>
            <person name="Hauser L."/>
            <person name="Mikhailova N."/>
            <person name="Li T."/>
            <person name="Overmann J."/>
            <person name="Schuster S.C."/>
            <person name="Bryant D.A."/>
            <person name="Richardson P."/>
        </authorList>
    </citation>
    <scope>NUCLEOTIDE SEQUENCE [LARGE SCALE GENOMIC DNA]</scope>
    <source>
        <strain>DSM 265 / 1930</strain>
    </source>
</reference>
<keyword id="KW-0067">ATP-binding</keyword>
<keyword id="KW-0227">DNA damage</keyword>
<keyword id="KW-0234">DNA repair</keyword>
<keyword id="KW-0238">DNA-binding</keyword>
<keyword id="KW-0547">Nucleotide-binding</keyword>
<dbReference type="EMBL" id="CP000607">
    <property type="protein sequence ID" value="ABP37340.1"/>
    <property type="molecule type" value="Genomic_DNA"/>
</dbReference>
<dbReference type="SMR" id="A4SFT1"/>
<dbReference type="STRING" id="290318.Cvib_1328"/>
<dbReference type="KEGG" id="pvi:Cvib_1328"/>
<dbReference type="eggNOG" id="COG0249">
    <property type="taxonomic scope" value="Bacteria"/>
</dbReference>
<dbReference type="HOGENOM" id="CLU_002472_4_0_10"/>
<dbReference type="OrthoDB" id="9802448at2"/>
<dbReference type="GO" id="GO:0005829">
    <property type="term" value="C:cytosol"/>
    <property type="evidence" value="ECO:0007669"/>
    <property type="project" value="TreeGrafter"/>
</dbReference>
<dbReference type="GO" id="GO:0005524">
    <property type="term" value="F:ATP binding"/>
    <property type="evidence" value="ECO:0007669"/>
    <property type="project" value="UniProtKB-UniRule"/>
</dbReference>
<dbReference type="GO" id="GO:0140664">
    <property type="term" value="F:ATP-dependent DNA damage sensor activity"/>
    <property type="evidence" value="ECO:0007669"/>
    <property type="project" value="InterPro"/>
</dbReference>
<dbReference type="GO" id="GO:0003684">
    <property type="term" value="F:damaged DNA binding"/>
    <property type="evidence" value="ECO:0007669"/>
    <property type="project" value="UniProtKB-UniRule"/>
</dbReference>
<dbReference type="GO" id="GO:0030983">
    <property type="term" value="F:mismatched DNA binding"/>
    <property type="evidence" value="ECO:0007669"/>
    <property type="project" value="InterPro"/>
</dbReference>
<dbReference type="GO" id="GO:0006298">
    <property type="term" value="P:mismatch repair"/>
    <property type="evidence" value="ECO:0007669"/>
    <property type="project" value="UniProtKB-UniRule"/>
</dbReference>
<dbReference type="CDD" id="cd03284">
    <property type="entry name" value="ABC_MutS1"/>
    <property type="match status" value="1"/>
</dbReference>
<dbReference type="FunFam" id="3.40.1170.10:FF:000001">
    <property type="entry name" value="DNA mismatch repair protein MutS"/>
    <property type="match status" value="1"/>
</dbReference>
<dbReference type="FunFam" id="3.40.50.300:FF:000870">
    <property type="entry name" value="MutS protein homolog 4"/>
    <property type="match status" value="1"/>
</dbReference>
<dbReference type="Gene3D" id="1.10.1420.10">
    <property type="match status" value="2"/>
</dbReference>
<dbReference type="Gene3D" id="3.40.1170.10">
    <property type="entry name" value="DNA repair protein MutS, domain I"/>
    <property type="match status" value="1"/>
</dbReference>
<dbReference type="Gene3D" id="3.30.420.110">
    <property type="entry name" value="MutS, connector domain"/>
    <property type="match status" value="1"/>
</dbReference>
<dbReference type="Gene3D" id="3.40.50.300">
    <property type="entry name" value="P-loop containing nucleotide triphosphate hydrolases"/>
    <property type="match status" value="1"/>
</dbReference>
<dbReference type="HAMAP" id="MF_00096">
    <property type="entry name" value="MutS"/>
    <property type="match status" value="1"/>
</dbReference>
<dbReference type="InterPro" id="IPR005748">
    <property type="entry name" value="DNA_mismatch_repair_MutS"/>
</dbReference>
<dbReference type="InterPro" id="IPR007695">
    <property type="entry name" value="DNA_mismatch_repair_MutS-lik_N"/>
</dbReference>
<dbReference type="InterPro" id="IPR017261">
    <property type="entry name" value="DNA_mismatch_repair_MutS/MSH"/>
</dbReference>
<dbReference type="InterPro" id="IPR000432">
    <property type="entry name" value="DNA_mismatch_repair_MutS_C"/>
</dbReference>
<dbReference type="InterPro" id="IPR007861">
    <property type="entry name" value="DNA_mismatch_repair_MutS_clamp"/>
</dbReference>
<dbReference type="InterPro" id="IPR007696">
    <property type="entry name" value="DNA_mismatch_repair_MutS_core"/>
</dbReference>
<dbReference type="InterPro" id="IPR016151">
    <property type="entry name" value="DNA_mismatch_repair_MutS_N"/>
</dbReference>
<dbReference type="InterPro" id="IPR036187">
    <property type="entry name" value="DNA_mismatch_repair_MutS_sf"/>
</dbReference>
<dbReference type="InterPro" id="IPR007860">
    <property type="entry name" value="DNA_mmatch_repair_MutS_con_dom"/>
</dbReference>
<dbReference type="InterPro" id="IPR045076">
    <property type="entry name" value="MutS"/>
</dbReference>
<dbReference type="InterPro" id="IPR036678">
    <property type="entry name" value="MutS_con_dom_sf"/>
</dbReference>
<dbReference type="InterPro" id="IPR027417">
    <property type="entry name" value="P-loop_NTPase"/>
</dbReference>
<dbReference type="NCBIfam" id="TIGR01070">
    <property type="entry name" value="mutS1"/>
    <property type="match status" value="1"/>
</dbReference>
<dbReference type="NCBIfam" id="NF003810">
    <property type="entry name" value="PRK05399.1"/>
    <property type="match status" value="1"/>
</dbReference>
<dbReference type="PANTHER" id="PTHR11361:SF34">
    <property type="entry name" value="DNA MISMATCH REPAIR PROTEIN MSH1, MITOCHONDRIAL"/>
    <property type="match status" value="1"/>
</dbReference>
<dbReference type="PANTHER" id="PTHR11361">
    <property type="entry name" value="DNA MISMATCH REPAIR PROTEIN MUTS FAMILY MEMBER"/>
    <property type="match status" value="1"/>
</dbReference>
<dbReference type="Pfam" id="PF01624">
    <property type="entry name" value="MutS_I"/>
    <property type="match status" value="1"/>
</dbReference>
<dbReference type="Pfam" id="PF05188">
    <property type="entry name" value="MutS_II"/>
    <property type="match status" value="1"/>
</dbReference>
<dbReference type="Pfam" id="PF05192">
    <property type="entry name" value="MutS_III"/>
    <property type="match status" value="1"/>
</dbReference>
<dbReference type="Pfam" id="PF05190">
    <property type="entry name" value="MutS_IV"/>
    <property type="match status" value="1"/>
</dbReference>
<dbReference type="Pfam" id="PF00488">
    <property type="entry name" value="MutS_V"/>
    <property type="match status" value="1"/>
</dbReference>
<dbReference type="PIRSF" id="PIRSF037677">
    <property type="entry name" value="DNA_mis_repair_Msh6"/>
    <property type="match status" value="1"/>
</dbReference>
<dbReference type="SMART" id="SM00534">
    <property type="entry name" value="MUTSac"/>
    <property type="match status" value="1"/>
</dbReference>
<dbReference type="SMART" id="SM00533">
    <property type="entry name" value="MUTSd"/>
    <property type="match status" value="1"/>
</dbReference>
<dbReference type="SUPFAM" id="SSF55271">
    <property type="entry name" value="DNA repair protein MutS, domain I"/>
    <property type="match status" value="1"/>
</dbReference>
<dbReference type="SUPFAM" id="SSF53150">
    <property type="entry name" value="DNA repair protein MutS, domain II"/>
    <property type="match status" value="1"/>
</dbReference>
<dbReference type="SUPFAM" id="SSF48334">
    <property type="entry name" value="DNA repair protein MutS, domain III"/>
    <property type="match status" value="1"/>
</dbReference>
<dbReference type="SUPFAM" id="SSF52540">
    <property type="entry name" value="P-loop containing nucleoside triphosphate hydrolases"/>
    <property type="match status" value="1"/>
</dbReference>
<dbReference type="PROSITE" id="PS00486">
    <property type="entry name" value="DNA_MISMATCH_REPAIR_2"/>
    <property type="match status" value="1"/>
</dbReference>